<comment type="function">
    <text evidence="1">Catalyzes the dehydration of the S-form of NAD(P)HX at the expense of ATP, which is converted to ADP. Together with NAD(P)HX epimerase, which catalyzes the epimerization of the S- and R-forms, the enzyme allows the repair of both epimers of NAD(P)HX, a damaged form of NAD(P)H that is a result of enzymatic or heat-dependent hydration.</text>
</comment>
<comment type="catalytic activity">
    <reaction evidence="1">
        <text>(6S)-NADHX + ATP = ADP + phosphate + NADH + H(+)</text>
        <dbReference type="Rhea" id="RHEA:19017"/>
        <dbReference type="ChEBI" id="CHEBI:15378"/>
        <dbReference type="ChEBI" id="CHEBI:30616"/>
        <dbReference type="ChEBI" id="CHEBI:43474"/>
        <dbReference type="ChEBI" id="CHEBI:57945"/>
        <dbReference type="ChEBI" id="CHEBI:64074"/>
        <dbReference type="ChEBI" id="CHEBI:456216"/>
        <dbReference type="EC" id="4.2.1.93"/>
    </reaction>
</comment>
<comment type="catalytic activity">
    <reaction>
        <text>(6S)-NADPHX + ATP = ADP + phosphate + NADPH + H(+)</text>
        <dbReference type="Rhea" id="RHEA:32231"/>
        <dbReference type="ChEBI" id="CHEBI:15378"/>
        <dbReference type="ChEBI" id="CHEBI:30616"/>
        <dbReference type="ChEBI" id="CHEBI:43474"/>
        <dbReference type="ChEBI" id="CHEBI:57783"/>
        <dbReference type="ChEBI" id="CHEBI:64076"/>
        <dbReference type="ChEBI" id="CHEBI:456216"/>
        <dbReference type="EC" id="4.2.1.93"/>
    </reaction>
</comment>
<comment type="cofactor">
    <cofactor evidence="1">
        <name>Mg(2+)</name>
        <dbReference type="ChEBI" id="CHEBI:18420"/>
    </cofactor>
</comment>
<comment type="subcellular location">
    <subcellularLocation>
        <location evidence="1">Cytoplasm</location>
    </subcellularLocation>
</comment>
<comment type="similarity">
    <text evidence="1">Belongs to the NnrD/CARKD family.</text>
</comment>
<name>NNRD_CRYNJ</name>
<gene>
    <name type="ordered locus">CNL05250</name>
</gene>
<accession>Q5K8L4</accession>
<accession>Q55M55</accession>
<reference key="1">
    <citation type="journal article" date="2005" name="Science">
        <title>The genome of the basidiomycetous yeast and human pathogen Cryptococcus neoformans.</title>
        <authorList>
            <person name="Loftus B.J."/>
            <person name="Fung E."/>
            <person name="Roncaglia P."/>
            <person name="Rowley D."/>
            <person name="Amedeo P."/>
            <person name="Bruno D."/>
            <person name="Vamathevan J."/>
            <person name="Miranda M."/>
            <person name="Anderson I.J."/>
            <person name="Fraser J.A."/>
            <person name="Allen J.E."/>
            <person name="Bosdet I.E."/>
            <person name="Brent M.R."/>
            <person name="Chiu R."/>
            <person name="Doering T.L."/>
            <person name="Donlin M.J."/>
            <person name="D'Souza C.A."/>
            <person name="Fox D.S."/>
            <person name="Grinberg V."/>
            <person name="Fu J."/>
            <person name="Fukushima M."/>
            <person name="Haas B.J."/>
            <person name="Huang J.C."/>
            <person name="Janbon G."/>
            <person name="Jones S.J.M."/>
            <person name="Koo H.L."/>
            <person name="Krzywinski M.I."/>
            <person name="Kwon-Chung K.J."/>
            <person name="Lengeler K.B."/>
            <person name="Maiti R."/>
            <person name="Marra M.A."/>
            <person name="Marra R.E."/>
            <person name="Mathewson C.A."/>
            <person name="Mitchell T.G."/>
            <person name="Pertea M."/>
            <person name="Riggs F.R."/>
            <person name="Salzberg S.L."/>
            <person name="Schein J.E."/>
            <person name="Shvartsbeyn A."/>
            <person name="Shin H."/>
            <person name="Shumway M."/>
            <person name="Specht C.A."/>
            <person name="Suh B.B."/>
            <person name="Tenney A."/>
            <person name="Utterback T.R."/>
            <person name="Wickes B.L."/>
            <person name="Wortman J.R."/>
            <person name="Wye N.H."/>
            <person name="Kronstad J.W."/>
            <person name="Lodge J.K."/>
            <person name="Heitman J."/>
            <person name="Davis R.W."/>
            <person name="Fraser C.M."/>
            <person name="Hyman R.W."/>
        </authorList>
    </citation>
    <scope>NUCLEOTIDE SEQUENCE [LARGE SCALE GENOMIC DNA]</scope>
    <source>
        <strain>JEC21 / ATCC MYA-565</strain>
    </source>
</reference>
<keyword id="KW-0067">ATP-binding</keyword>
<keyword id="KW-0963">Cytoplasm</keyword>
<keyword id="KW-0456">Lyase</keyword>
<keyword id="KW-0520">NAD</keyword>
<keyword id="KW-0521">NADP</keyword>
<keyword id="KW-0547">Nucleotide-binding</keyword>
<keyword id="KW-0597">Phosphoprotein</keyword>
<keyword id="KW-1185">Reference proteome</keyword>
<evidence type="ECO:0000255" key="1">
    <source>
        <dbReference type="HAMAP-Rule" id="MF_03157"/>
    </source>
</evidence>
<sequence length="345" mass="37024">MASKQHAHILSLARSMIPPLHPKLHKGQAGRIGVLGGSGDYSGAPYFSSMGAMRFGADLAHVICEPSAGAVIKTYSPDLIVHTILDPQKSREDIRSALKGVMSRLHVLIIGPGLGRDDHMQSCAKIAFELAKDMEQMGVVVDADGLWLVQNEPKVVMDWPGVPRIILTPNVMEFKRLCDTMKINASGPHTSLCPQLATALGNATIIQKGPSDIISNGLKIPSALLSDESEEQNYLEVKVEGGLKRVGGQGDILSGSTGVLLAWGSEWVRGTYEHVGHPPPQDKAIAENIPVLAAYGASTFNRTVSKRGFQKKGRSMVTGDLVDMVGEVYEEVFGKPGEMEGRGKL</sequence>
<dbReference type="EC" id="4.2.1.93" evidence="1"/>
<dbReference type="EMBL" id="AE017352">
    <property type="protein sequence ID" value="AAW46547.2"/>
    <property type="molecule type" value="Genomic_DNA"/>
</dbReference>
<dbReference type="RefSeq" id="XP_024513850.1">
    <property type="nucleotide sequence ID" value="XM_024658179.1"/>
</dbReference>
<dbReference type="RefSeq" id="XP_568064.1">
    <property type="nucleotide sequence ID" value="XM_568064.1"/>
</dbReference>
<dbReference type="SMR" id="Q5K8L4"/>
<dbReference type="FunCoup" id="Q5K8L4">
    <property type="interactions" value="20"/>
</dbReference>
<dbReference type="STRING" id="214684.Q5K8L4"/>
<dbReference type="PaxDb" id="214684-Q5K8L4"/>
<dbReference type="GeneID" id="3254945"/>
<dbReference type="eggNOG" id="KOG3974">
    <property type="taxonomic scope" value="Eukaryota"/>
</dbReference>
<dbReference type="HOGENOM" id="CLU_030651_3_0_1"/>
<dbReference type="InParanoid" id="Q5K8L4"/>
<dbReference type="Proteomes" id="UP000002149">
    <property type="component" value="Chromosome 12"/>
</dbReference>
<dbReference type="GO" id="GO:0005737">
    <property type="term" value="C:cytoplasm"/>
    <property type="evidence" value="ECO:0007669"/>
    <property type="project" value="UniProtKB-SubCell"/>
</dbReference>
<dbReference type="GO" id="GO:0005524">
    <property type="term" value="F:ATP binding"/>
    <property type="evidence" value="ECO:0007669"/>
    <property type="project" value="UniProtKB-KW"/>
</dbReference>
<dbReference type="GO" id="GO:0047453">
    <property type="term" value="F:ATP-dependent NAD(P)H-hydrate dehydratase activity"/>
    <property type="evidence" value="ECO:0000318"/>
    <property type="project" value="GO_Central"/>
</dbReference>
<dbReference type="GO" id="GO:0110051">
    <property type="term" value="P:metabolite repair"/>
    <property type="evidence" value="ECO:0000318"/>
    <property type="project" value="GO_Central"/>
</dbReference>
<dbReference type="GO" id="GO:0046496">
    <property type="term" value="P:nicotinamide nucleotide metabolic process"/>
    <property type="evidence" value="ECO:0007669"/>
    <property type="project" value="UniProtKB-UniRule"/>
</dbReference>
<dbReference type="CDD" id="cd01171">
    <property type="entry name" value="YXKO-related"/>
    <property type="match status" value="1"/>
</dbReference>
<dbReference type="Gene3D" id="3.40.1190.20">
    <property type="match status" value="1"/>
</dbReference>
<dbReference type="HAMAP" id="MF_01965">
    <property type="entry name" value="NADHX_dehydratase"/>
    <property type="match status" value="1"/>
</dbReference>
<dbReference type="InterPro" id="IPR000631">
    <property type="entry name" value="CARKD"/>
</dbReference>
<dbReference type="InterPro" id="IPR029056">
    <property type="entry name" value="Ribokinase-like"/>
</dbReference>
<dbReference type="NCBIfam" id="TIGR00196">
    <property type="entry name" value="yjeF_cterm"/>
    <property type="match status" value="1"/>
</dbReference>
<dbReference type="PANTHER" id="PTHR12592:SF0">
    <property type="entry name" value="ATP-DEPENDENT (S)-NAD(P)H-HYDRATE DEHYDRATASE"/>
    <property type="match status" value="1"/>
</dbReference>
<dbReference type="PANTHER" id="PTHR12592">
    <property type="entry name" value="ATP-DEPENDENT (S)-NAD(P)H-HYDRATE DEHYDRATASE FAMILY MEMBER"/>
    <property type="match status" value="1"/>
</dbReference>
<dbReference type="Pfam" id="PF01256">
    <property type="entry name" value="Carb_kinase"/>
    <property type="match status" value="1"/>
</dbReference>
<dbReference type="SUPFAM" id="SSF53613">
    <property type="entry name" value="Ribokinase-like"/>
    <property type="match status" value="1"/>
</dbReference>
<dbReference type="PROSITE" id="PS51383">
    <property type="entry name" value="YJEF_C_3"/>
    <property type="match status" value="1"/>
</dbReference>
<protein>
    <recommendedName>
        <fullName evidence="1">ATP-dependent (S)-NAD(P)H-hydrate dehydratase</fullName>
        <ecNumber evidence="1">4.2.1.93</ecNumber>
    </recommendedName>
    <alternativeName>
        <fullName evidence="1">ATP-dependent NAD(P)HX dehydratase</fullName>
    </alternativeName>
</protein>
<proteinExistence type="inferred from homology"/>
<feature type="chain" id="PRO_0000416183" description="ATP-dependent (S)-NAD(P)H-hydrate dehydratase">
    <location>
        <begin position="1"/>
        <end position="345"/>
    </location>
</feature>
<feature type="domain" description="YjeF C-terminal" evidence="1">
    <location>
        <begin position="9"/>
        <end position="332"/>
    </location>
</feature>
<feature type="binding site" evidence="1">
    <location>
        <position position="113"/>
    </location>
    <ligand>
        <name>(6S)-NADPHX</name>
        <dbReference type="ChEBI" id="CHEBI:64076"/>
    </ligand>
</feature>
<feature type="binding site" evidence="1">
    <location>
        <begin position="170"/>
        <end position="176"/>
    </location>
    <ligand>
        <name>(6S)-NADPHX</name>
        <dbReference type="ChEBI" id="CHEBI:64076"/>
    </ligand>
</feature>
<feature type="binding site" evidence="1">
    <location>
        <begin position="208"/>
        <end position="212"/>
    </location>
    <ligand>
        <name>ATP</name>
        <dbReference type="ChEBI" id="CHEBI:30616"/>
    </ligand>
</feature>
<feature type="binding site" evidence="1">
    <location>
        <begin position="241"/>
        <end position="250"/>
    </location>
    <ligand>
        <name>ATP</name>
        <dbReference type="ChEBI" id="CHEBI:30616"/>
    </ligand>
</feature>
<feature type="binding site" evidence="1">
    <location>
        <position position="251"/>
    </location>
    <ligand>
        <name>(6S)-NADPHX</name>
        <dbReference type="ChEBI" id="CHEBI:64076"/>
    </ligand>
</feature>
<organism>
    <name type="scientific">Cryptococcus neoformans var. neoformans serotype D (strain JEC21 / ATCC MYA-565)</name>
    <name type="common">Filobasidiella neoformans</name>
    <dbReference type="NCBI Taxonomy" id="214684"/>
    <lineage>
        <taxon>Eukaryota</taxon>
        <taxon>Fungi</taxon>
        <taxon>Dikarya</taxon>
        <taxon>Basidiomycota</taxon>
        <taxon>Agaricomycotina</taxon>
        <taxon>Tremellomycetes</taxon>
        <taxon>Tremellales</taxon>
        <taxon>Cryptococcaceae</taxon>
        <taxon>Cryptococcus</taxon>
        <taxon>Cryptococcus neoformans species complex</taxon>
    </lineage>
</organism>